<name>PUR4_PHOLL</name>
<sequence length="1295" mass="142784">MKILRGSPALSAFRITKLLSVCQEQQLPVNDIYAEYVHFAEINASLSDVDSAKLQQLLKYGPSLAEHEPQGTLLLVTPRPGTISPWSSKATDIAHNCGLSQVVRLERGVAYYIQSGEMSDTQWQILSSLLHDRMMETVFTQLEQAEKLFSRQQPVPLKRIDILQAGRSALETANIELGLALASDEIDYLMDAFQKLGRNPTDVELYMFAQANSEHCRHKIFNADWIIDSQAQPKSLFKMIKNTYEQTPDYVLSAYKDNAAVMEGSAVGRFFASAENGSYDYHQEQAHILMKVETHNHPTAISPWPGASTGSGGEIRDEGATGRGAKPKAGLVGFSVSNLRIPGFEQPWEEDFGKPERIVSALDIMMEGPLGGAAFNNEFGRPALLGYFRTYEEKVNSHNGSELRGYHKPIMLAGGIGNIRDEHVKKGEISVGAKLIVLGGPSMNIGLGGGAASSMASGQSDADLDFASVQRDNPEMERRCQEVIDRCWQLGENNPILFIHDVGAGGLSNAMPELVSDGGRGGRFELRKILNDEPGMSPLEVWCNESQERYVLAVAPEQLPLFEEICRRERAPYAIIGEATEERHLLLNDEHFDNQPIDMPLDVLLGKTPKMLRDVTTLKASGESLERRDIDLAEAVKRIMHLPAVAEKTFLITIGDRSVTGMVSRDQMVGPWQIPVADCAVTTASLDSYYGEAMSMGERAPVALLDFAASARMAVGEALTNIASAYIQDLKRIKLSANWMSAAGHPGEDAGLYAAVKAVGEELCPALGLTIPVGKDSMSMKTRWHDQGEEREMTAPLSLVITAFARVEDVRRTVTPELSTDEDNALLLIDLGQGKNTLGGTALAQVYRLLGNKTADVRSAEQLAGFFNAIQQLIAEQKLLAYHDRSDGGLLVTLAEMAFAGHCGIEADISVFDEDILAGLFTEELGAVVQIRASDRGFVESILAEHGLADCVHYLGKAQAGDDFVIFSGNTEVYRQNRSTLRLWWAETTWQMQRLRDNPACADQEHQAKQDNQDPGLNVKLTFDISEDIAAPYILQQVRPKVAVLREQGVNSHVEMAAAFHRAGFEAIDVHMSDLLSGRIGLSQFQTLVACGGFSYGDVLGAGEGWAKSILFNERVRDQFAVFFARPDTLALGVCNGCQMMSNLRELIPGAEHWPRFVRNRSERFEARFSLVEITDSPSLFLQDMVGSRIPIAVSHGEGQVEFRNRQHLEMLESNQLVALRYVNNYGQVTENYPANPNGSVNGITAVTSLDGRATVMMPHPERVSRTVNNSWHPDEWREDGPWMRIFRNARKQLG</sequence>
<proteinExistence type="inferred from homology"/>
<protein>
    <recommendedName>
        <fullName evidence="1">Phosphoribosylformylglycinamidine synthase</fullName>
        <shortName evidence="1">FGAM synthase</shortName>
        <shortName evidence="1">FGAMS</shortName>
        <ecNumber evidence="1">6.3.5.3</ecNumber>
    </recommendedName>
    <alternativeName>
        <fullName evidence="1">Formylglycinamide ribonucleotide amidotransferase</fullName>
        <shortName evidence="1">FGAR amidotransferase</shortName>
        <shortName evidence="1">FGAR-AT</shortName>
    </alternativeName>
</protein>
<keyword id="KW-0067">ATP-binding</keyword>
<keyword id="KW-0963">Cytoplasm</keyword>
<keyword id="KW-0315">Glutamine amidotransferase</keyword>
<keyword id="KW-0436">Ligase</keyword>
<keyword id="KW-0460">Magnesium</keyword>
<keyword id="KW-0479">Metal-binding</keyword>
<keyword id="KW-0547">Nucleotide-binding</keyword>
<keyword id="KW-0658">Purine biosynthesis</keyword>
<keyword id="KW-1185">Reference proteome</keyword>
<gene>
    <name evidence="1" type="primary">purL</name>
    <name type="ordered locus">plu3317</name>
</gene>
<dbReference type="EC" id="6.3.5.3" evidence="1"/>
<dbReference type="EMBL" id="BX571870">
    <property type="protein sequence ID" value="CAE15691.1"/>
    <property type="molecule type" value="Genomic_DNA"/>
</dbReference>
<dbReference type="RefSeq" id="WP_041381011.1">
    <property type="nucleotide sequence ID" value="NC_005126.1"/>
</dbReference>
<dbReference type="SMR" id="Q7N1Z4"/>
<dbReference type="STRING" id="243265.plu3317"/>
<dbReference type="MEROPS" id="C56.972"/>
<dbReference type="GeneID" id="48849570"/>
<dbReference type="KEGG" id="plu:plu3317"/>
<dbReference type="eggNOG" id="COG0046">
    <property type="taxonomic scope" value="Bacteria"/>
</dbReference>
<dbReference type="eggNOG" id="COG0047">
    <property type="taxonomic scope" value="Bacteria"/>
</dbReference>
<dbReference type="HOGENOM" id="CLU_001031_0_2_6"/>
<dbReference type="OrthoDB" id="9804441at2"/>
<dbReference type="UniPathway" id="UPA00074">
    <property type="reaction ID" value="UER00128"/>
</dbReference>
<dbReference type="Proteomes" id="UP000002514">
    <property type="component" value="Chromosome"/>
</dbReference>
<dbReference type="GO" id="GO:0005737">
    <property type="term" value="C:cytoplasm"/>
    <property type="evidence" value="ECO:0007669"/>
    <property type="project" value="UniProtKB-SubCell"/>
</dbReference>
<dbReference type="GO" id="GO:0005524">
    <property type="term" value="F:ATP binding"/>
    <property type="evidence" value="ECO:0007669"/>
    <property type="project" value="UniProtKB-UniRule"/>
</dbReference>
<dbReference type="GO" id="GO:0046872">
    <property type="term" value="F:metal ion binding"/>
    <property type="evidence" value="ECO:0007669"/>
    <property type="project" value="UniProtKB-KW"/>
</dbReference>
<dbReference type="GO" id="GO:0004642">
    <property type="term" value="F:phosphoribosylformylglycinamidine synthase activity"/>
    <property type="evidence" value="ECO:0007669"/>
    <property type="project" value="UniProtKB-UniRule"/>
</dbReference>
<dbReference type="GO" id="GO:0006189">
    <property type="term" value="P:'de novo' IMP biosynthetic process"/>
    <property type="evidence" value="ECO:0007669"/>
    <property type="project" value="UniProtKB-UniRule"/>
</dbReference>
<dbReference type="CDD" id="cd01740">
    <property type="entry name" value="GATase1_FGAR_AT"/>
    <property type="match status" value="1"/>
</dbReference>
<dbReference type="CDD" id="cd02203">
    <property type="entry name" value="PurL_repeat1"/>
    <property type="match status" value="1"/>
</dbReference>
<dbReference type="FunFam" id="1.10.8.750:FF:000002">
    <property type="entry name" value="Phosphoribosylformylglycinamidine synthase"/>
    <property type="match status" value="1"/>
</dbReference>
<dbReference type="FunFam" id="3.30.1330.10:FF:000002">
    <property type="entry name" value="Phosphoribosylformylglycinamidine synthase"/>
    <property type="match status" value="1"/>
</dbReference>
<dbReference type="FunFam" id="3.30.1330.10:FF:000005">
    <property type="entry name" value="Phosphoribosylformylglycinamidine synthase"/>
    <property type="match status" value="1"/>
</dbReference>
<dbReference type="FunFam" id="3.40.50.880:FF:000008">
    <property type="entry name" value="Phosphoribosylformylglycinamidine synthase"/>
    <property type="match status" value="1"/>
</dbReference>
<dbReference type="FunFam" id="3.90.650.10:FF:000002">
    <property type="entry name" value="Phosphoribosylformylglycinamidine synthase"/>
    <property type="match status" value="1"/>
</dbReference>
<dbReference type="FunFam" id="3.90.650.10:FF:000005">
    <property type="entry name" value="Phosphoribosylformylglycinamidine synthase"/>
    <property type="match status" value="1"/>
</dbReference>
<dbReference type="Gene3D" id="3.40.50.880">
    <property type="match status" value="1"/>
</dbReference>
<dbReference type="Gene3D" id="1.10.8.750">
    <property type="entry name" value="Phosphoribosylformylglycinamidine synthase, linker domain"/>
    <property type="match status" value="1"/>
</dbReference>
<dbReference type="Gene3D" id="3.90.650.10">
    <property type="entry name" value="PurM-like C-terminal domain"/>
    <property type="match status" value="2"/>
</dbReference>
<dbReference type="Gene3D" id="3.30.1330.10">
    <property type="entry name" value="PurM-like, N-terminal domain"/>
    <property type="match status" value="2"/>
</dbReference>
<dbReference type="HAMAP" id="MF_00419">
    <property type="entry name" value="PurL_1"/>
    <property type="match status" value="1"/>
</dbReference>
<dbReference type="InterPro" id="IPR029062">
    <property type="entry name" value="Class_I_gatase-like"/>
</dbReference>
<dbReference type="InterPro" id="IPR040707">
    <property type="entry name" value="FGAR-AT_N"/>
</dbReference>
<dbReference type="InterPro" id="IPR055181">
    <property type="entry name" value="FGAR-AT_PurM_N-like"/>
</dbReference>
<dbReference type="InterPro" id="IPR010073">
    <property type="entry name" value="PurL_large"/>
</dbReference>
<dbReference type="InterPro" id="IPR041609">
    <property type="entry name" value="PurL_linker"/>
</dbReference>
<dbReference type="InterPro" id="IPR010918">
    <property type="entry name" value="PurM-like_C_dom"/>
</dbReference>
<dbReference type="InterPro" id="IPR036676">
    <property type="entry name" value="PurM-like_C_sf"/>
</dbReference>
<dbReference type="InterPro" id="IPR036921">
    <property type="entry name" value="PurM-like_N_sf"/>
</dbReference>
<dbReference type="InterPro" id="IPR036604">
    <property type="entry name" value="PurS-like_sf"/>
</dbReference>
<dbReference type="NCBIfam" id="TIGR01735">
    <property type="entry name" value="FGAM_synt"/>
    <property type="match status" value="1"/>
</dbReference>
<dbReference type="NCBIfam" id="NF003672">
    <property type="entry name" value="PRK05297.1"/>
    <property type="match status" value="1"/>
</dbReference>
<dbReference type="PANTHER" id="PTHR10099">
    <property type="entry name" value="PHOSPHORIBOSYLFORMYLGLYCINAMIDINE SYNTHASE"/>
    <property type="match status" value="1"/>
</dbReference>
<dbReference type="PANTHER" id="PTHR10099:SF1">
    <property type="entry name" value="PHOSPHORIBOSYLFORMYLGLYCINAMIDINE SYNTHASE"/>
    <property type="match status" value="1"/>
</dbReference>
<dbReference type="Pfam" id="PF02769">
    <property type="entry name" value="AIRS_C"/>
    <property type="match status" value="2"/>
</dbReference>
<dbReference type="Pfam" id="PF18072">
    <property type="entry name" value="FGAR-AT_linker"/>
    <property type="match status" value="1"/>
</dbReference>
<dbReference type="Pfam" id="PF18076">
    <property type="entry name" value="FGAR-AT_N"/>
    <property type="match status" value="1"/>
</dbReference>
<dbReference type="Pfam" id="PF22689">
    <property type="entry name" value="FGAR-AT_PurM_N-like"/>
    <property type="match status" value="1"/>
</dbReference>
<dbReference type="Pfam" id="PF13507">
    <property type="entry name" value="GATase_5"/>
    <property type="match status" value="1"/>
</dbReference>
<dbReference type="SMART" id="SM01211">
    <property type="entry name" value="GATase_5"/>
    <property type="match status" value="1"/>
</dbReference>
<dbReference type="SUPFAM" id="SSF52317">
    <property type="entry name" value="Class I glutamine amidotransferase-like"/>
    <property type="match status" value="1"/>
</dbReference>
<dbReference type="SUPFAM" id="SSF109736">
    <property type="entry name" value="FGAM synthase PurL, linker domain"/>
    <property type="match status" value="1"/>
</dbReference>
<dbReference type="SUPFAM" id="SSF56042">
    <property type="entry name" value="PurM C-terminal domain-like"/>
    <property type="match status" value="2"/>
</dbReference>
<dbReference type="SUPFAM" id="SSF55326">
    <property type="entry name" value="PurM N-terminal domain-like"/>
    <property type="match status" value="2"/>
</dbReference>
<dbReference type="SUPFAM" id="SSF82697">
    <property type="entry name" value="PurS-like"/>
    <property type="match status" value="1"/>
</dbReference>
<dbReference type="PROSITE" id="PS51273">
    <property type="entry name" value="GATASE_TYPE_1"/>
    <property type="match status" value="1"/>
</dbReference>
<accession>Q7N1Z4</accession>
<comment type="function">
    <text evidence="1">Phosphoribosylformylglycinamidine synthase involved in the purines biosynthetic pathway. Catalyzes the ATP-dependent conversion of formylglycinamide ribonucleotide (FGAR) and glutamine to yield formylglycinamidine ribonucleotide (FGAM) and glutamate.</text>
</comment>
<comment type="catalytic activity">
    <reaction evidence="1">
        <text>N(2)-formyl-N(1)-(5-phospho-beta-D-ribosyl)glycinamide + L-glutamine + ATP + H2O = 2-formamido-N(1)-(5-O-phospho-beta-D-ribosyl)acetamidine + L-glutamate + ADP + phosphate + H(+)</text>
        <dbReference type="Rhea" id="RHEA:17129"/>
        <dbReference type="ChEBI" id="CHEBI:15377"/>
        <dbReference type="ChEBI" id="CHEBI:15378"/>
        <dbReference type="ChEBI" id="CHEBI:29985"/>
        <dbReference type="ChEBI" id="CHEBI:30616"/>
        <dbReference type="ChEBI" id="CHEBI:43474"/>
        <dbReference type="ChEBI" id="CHEBI:58359"/>
        <dbReference type="ChEBI" id="CHEBI:147286"/>
        <dbReference type="ChEBI" id="CHEBI:147287"/>
        <dbReference type="ChEBI" id="CHEBI:456216"/>
        <dbReference type="EC" id="6.3.5.3"/>
    </reaction>
</comment>
<comment type="pathway">
    <text evidence="1">Purine metabolism; IMP biosynthesis via de novo pathway; 5-amino-1-(5-phospho-D-ribosyl)imidazole from N(2)-formyl-N(1)-(5-phospho-D-ribosyl)glycinamide: step 1/2.</text>
</comment>
<comment type="subunit">
    <text evidence="1">Monomer.</text>
</comment>
<comment type="subcellular location">
    <subcellularLocation>
        <location evidence="1">Cytoplasm</location>
    </subcellularLocation>
</comment>
<comment type="similarity">
    <text evidence="1">In the N-terminal section; belongs to the FGAMS family.</text>
</comment>
<feature type="chain" id="PRO_0000264584" description="Phosphoribosylformylglycinamidine synthase">
    <location>
        <begin position="1"/>
        <end position="1295"/>
    </location>
</feature>
<feature type="domain" description="Glutamine amidotransferase type-1" evidence="1">
    <location>
        <begin position="1042"/>
        <end position="1295"/>
    </location>
</feature>
<feature type="region of interest" description="Disordered" evidence="2">
    <location>
        <begin position="302"/>
        <end position="327"/>
    </location>
</feature>
<feature type="active site" description="Nucleophile" evidence="1">
    <location>
        <position position="1135"/>
    </location>
</feature>
<feature type="active site" evidence="1">
    <location>
        <position position="1260"/>
    </location>
</feature>
<feature type="active site" evidence="1">
    <location>
        <position position="1262"/>
    </location>
</feature>
<feature type="binding site" evidence="1">
    <location>
        <begin position="306"/>
        <end position="317"/>
    </location>
    <ligand>
        <name>ATP</name>
        <dbReference type="ChEBI" id="CHEBI:30616"/>
    </ligand>
</feature>
<feature type="binding site" evidence="1">
    <location>
        <position position="677"/>
    </location>
    <ligand>
        <name>ATP</name>
        <dbReference type="ChEBI" id="CHEBI:30616"/>
    </ligand>
</feature>
<feature type="binding site" evidence="1">
    <location>
        <position position="678"/>
    </location>
    <ligand>
        <name>Mg(2+)</name>
        <dbReference type="ChEBI" id="CHEBI:18420"/>
    </ligand>
</feature>
<feature type="binding site" evidence="1">
    <location>
        <position position="717"/>
    </location>
    <ligand>
        <name>Mg(2+)</name>
        <dbReference type="ChEBI" id="CHEBI:18420"/>
    </ligand>
</feature>
<feature type="binding site" evidence="1">
    <location>
        <position position="721"/>
    </location>
    <ligand>
        <name>Mg(2+)</name>
        <dbReference type="ChEBI" id="CHEBI:18420"/>
    </ligand>
</feature>
<feature type="binding site" evidence="1">
    <location>
        <position position="884"/>
    </location>
    <ligand>
        <name>Mg(2+)</name>
        <dbReference type="ChEBI" id="CHEBI:18420"/>
    </ligand>
</feature>
<feature type="binding site" evidence="1">
    <location>
        <position position="886"/>
    </location>
    <ligand>
        <name>ATP</name>
        <dbReference type="ChEBI" id="CHEBI:30616"/>
    </ligand>
</feature>
<reference key="1">
    <citation type="journal article" date="2003" name="Nat. Biotechnol.">
        <title>The genome sequence of the entomopathogenic bacterium Photorhabdus luminescens.</title>
        <authorList>
            <person name="Duchaud E."/>
            <person name="Rusniok C."/>
            <person name="Frangeul L."/>
            <person name="Buchrieser C."/>
            <person name="Givaudan A."/>
            <person name="Taourit S."/>
            <person name="Bocs S."/>
            <person name="Boursaux-Eude C."/>
            <person name="Chandler M."/>
            <person name="Charles J.-F."/>
            <person name="Dassa E."/>
            <person name="Derose R."/>
            <person name="Derzelle S."/>
            <person name="Freyssinet G."/>
            <person name="Gaudriault S."/>
            <person name="Medigue C."/>
            <person name="Lanois A."/>
            <person name="Powell K."/>
            <person name="Siguier P."/>
            <person name="Vincent R."/>
            <person name="Wingate V."/>
            <person name="Zouine M."/>
            <person name="Glaser P."/>
            <person name="Boemare N."/>
            <person name="Danchin A."/>
            <person name="Kunst F."/>
        </authorList>
    </citation>
    <scope>NUCLEOTIDE SEQUENCE [LARGE SCALE GENOMIC DNA]</scope>
    <source>
        <strain>DSM 15139 / CIP 105565 / TT01</strain>
    </source>
</reference>
<organism>
    <name type="scientific">Photorhabdus laumondii subsp. laumondii (strain DSM 15139 / CIP 105565 / TT01)</name>
    <name type="common">Photorhabdus luminescens subsp. laumondii</name>
    <dbReference type="NCBI Taxonomy" id="243265"/>
    <lineage>
        <taxon>Bacteria</taxon>
        <taxon>Pseudomonadati</taxon>
        <taxon>Pseudomonadota</taxon>
        <taxon>Gammaproteobacteria</taxon>
        <taxon>Enterobacterales</taxon>
        <taxon>Morganellaceae</taxon>
        <taxon>Photorhabdus</taxon>
    </lineage>
</organism>
<evidence type="ECO:0000255" key="1">
    <source>
        <dbReference type="HAMAP-Rule" id="MF_00419"/>
    </source>
</evidence>
<evidence type="ECO:0000256" key="2">
    <source>
        <dbReference type="SAM" id="MobiDB-lite"/>
    </source>
</evidence>